<reference key="1">
    <citation type="journal article" date="2009" name="PLoS Biol.">
        <title>Lineage-specific biology revealed by a finished genome assembly of the mouse.</title>
        <authorList>
            <person name="Church D.M."/>
            <person name="Goodstadt L."/>
            <person name="Hillier L.W."/>
            <person name="Zody M.C."/>
            <person name="Goldstein S."/>
            <person name="She X."/>
            <person name="Bult C.J."/>
            <person name="Agarwala R."/>
            <person name="Cherry J.L."/>
            <person name="DiCuccio M."/>
            <person name="Hlavina W."/>
            <person name="Kapustin Y."/>
            <person name="Meric P."/>
            <person name="Maglott D."/>
            <person name="Birtle Z."/>
            <person name="Marques A.C."/>
            <person name="Graves T."/>
            <person name="Zhou S."/>
            <person name="Teague B."/>
            <person name="Potamousis K."/>
            <person name="Churas C."/>
            <person name="Place M."/>
            <person name="Herschleb J."/>
            <person name="Runnheim R."/>
            <person name="Forrest D."/>
            <person name="Amos-Landgraf J."/>
            <person name="Schwartz D.C."/>
            <person name="Cheng Z."/>
            <person name="Lindblad-Toh K."/>
            <person name="Eichler E.E."/>
            <person name="Ponting C.P."/>
        </authorList>
    </citation>
    <scope>NUCLEOTIDE SEQUENCE [LARGE SCALE GENOMIC DNA]</scope>
    <source>
        <strain>C57BL/6J</strain>
    </source>
</reference>
<reference key="2">
    <citation type="journal article" date="1999" name="J. Neurochem.">
        <title>Complete sequence of a novel protein containing a femtomolar-activity-dependent neuroprotective peptide.</title>
        <authorList>
            <person name="Bassan M."/>
            <person name="Zamostiano R."/>
            <person name="Davidson A."/>
            <person name="Pinhasov A."/>
            <person name="Giladi E."/>
            <person name="Perl O."/>
            <person name="Bassan H."/>
            <person name="Blat C."/>
            <person name="Gibney G."/>
            <person name="Glazner G."/>
            <person name="Brenneman D.E."/>
            <person name="Gozes I."/>
        </authorList>
    </citation>
    <scope>NUCLEOTIDE SEQUENCE [MRNA] OF 281-1108</scope>
    <scope>SYNTHESIS OF 354-361</scope>
    <source>
        <tissue>Brain</tissue>
    </source>
</reference>
<reference key="3">
    <citation type="journal article" date="2007" name="Proc. Natl. Acad. Sci. U.S.A.">
        <title>Large-scale phosphorylation analysis of mouse liver.</title>
        <authorList>
            <person name="Villen J."/>
            <person name="Beausoleil S.A."/>
            <person name="Gerber S.A."/>
            <person name="Gygi S.P."/>
        </authorList>
    </citation>
    <scope>PHOSPHORYLATION [LARGE SCALE ANALYSIS] AT SER-959</scope>
    <scope>IDENTIFICATION BY MASS SPECTROMETRY [LARGE SCALE ANALYSIS]</scope>
    <source>
        <tissue>Liver</tissue>
    </source>
</reference>
<reference key="4">
    <citation type="journal article" date="2010" name="Cell">
        <title>A tissue-specific atlas of mouse protein phosphorylation and expression.</title>
        <authorList>
            <person name="Huttlin E.L."/>
            <person name="Jedrychowski M.P."/>
            <person name="Elias J.E."/>
            <person name="Goswami T."/>
            <person name="Rad R."/>
            <person name="Beausoleil S.A."/>
            <person name="Villen J."/>
            <person name="Haas W."/>
            <person name="Sowa M.E."/>
            <person name="Gygi S.P."/>
        </authorList>
    </citation>
    <scope>PHOSPHORYLATION [LARGE SCALE ANALYSIS] AT SER-708; SER-737; SER-888; SER-904; SER-959 AND SER-1077</scope>
    <scope>IDENTIFICATION BY MASS SPECTROMETRY [LARGE SCALE ANALYSIS]</scope>
    <source>
        <tissue>Brain</tissue>
        <tissue>Heart</tissue>
        <tissue>Kidney</tissue>
        <tissue>Lung</tissue>
        <tissue>Spleen</tissue>
        <tissue>Testis</tissue>
    </source>
</reference>
<reference key="5">
    <citation type="journal article" date="2012" name="J. Biol. Chem.">
        <title>Novel evolutionary-conserved role for the activity-dependent neuroprotective protein (ADNP) family that is important for erythropoiesis.</title>
        <authorList>
            <person name="Dresner E."/>
            <person name="Malishkevich A."/>
            <person name="Arviv C."/>
            <person name="Leibman Barak S."/>
            <person name="Alon S."/>
            <person name="Ofir R."/>
            <person name="Gothilf Y."/>
            <person name="Gozes I."/>
        </authorList>
    </citation>
    <scope>FUNCTION</scope>
</reference>
<reference key="6">
    <citation type="journal article" date="2014" name="Mol. Cell. Proteomics">
        <title>Immunoaffinity enrichment and mass spectrometry analysis of protein methylation.</title>
        <authorList>
            <person name="Guo A."/>
            <person name="Gu H."/>
            <person name="Zhou J."/>
            <person name="Mulhern D."/>
            <person name="Wang Y."/>
            <person name="Lee K.A."/>
            <person name="Yang V."/>
            <person name="Aguiar M."/>
            <person name="Kornhauser J."/>
            <person name="Jia X."/>
            <person name="Ren J."/>
            <person name="Beausoleil S.A."/>
            <person name="Silva J.C."/>
            <person name="Vemulapalli V."/>
            <person name="Bedford M.T."/>
            <person name="Comb M.J."/>
        </authorList>
    </citation>
    <scope>METHYLATION [LARGE SCALE ANALYSIS] AT ARG-348</scope>
    <scope>IDENTIFICATION BY MASS SPECTROMETRY [LARGE SCALE ANALYSIS]</scope>
    <source>
        <tissue>Brain</tissue>
        <tissue>Embryo</tissue>
    </source>
</reference>
<reference key="7">
    <citation type="journal article" date="2020" name="Nat. Commun.">
        <title>ADNP promotes neural differentiation by modulating Wnt/beta-catenin signaling.</title>
        <authorList>
            <person name="Sun X."/>
            <person name="Peng X."/>
            <person name="Cao Y."/>
            <person name="Zhou Y."/>
            <person name="Sun Y."/>
        </authorList>
    </citation>
    <scope>FUNCTION</scope>
</reference>
<gene>
    <name type="primary">Adnp</name>
</gene>
<keyword id="KW-0007">Acetylation</keyword>
<keyword id="KW-0158">Chromosome</keyword>
<keyword id="KW-0238">DNA-binding</keyword>
<keyword id="KW-0371">Homeobox</keyword>
<keyword id="KW-1017">Isopeptide bond</keyword>
<keyword id="KW-0479">Metal-binding</keyword>
<keyword id="KW-0488">Methylation</keyword>
<keyword id="KW-0539">Nucleus</keyword>
<keyword id="KW-0597">Phosphoprotein</keyword>
<keyword id="KW-1185">Reference proteome</keyword>
<keyword id="KW-0677">Repeat</keyword>
<keyword id="KW-0804">Transcription</keyword>
<keyword id="KW-0805">Transcription regulation</keyword>
<keyword id="KW-0832">Ubl conjugation</keyword>
<keyword id="KW-0862">Zinc</keyword>
<keyword id="KW-0863">Zinc-finger</keyword>
<feature type="chain" id="PRO_0000048808" description="Activity-dependent neuroprotector homeobox protein">
    <location>
        <begin position="1"/>
        <end position="1108"/>
    </location>
</feature>
<feature type="zinc finger region" description="C2H2-type 1; degenerate" evidence="3">
    <location>
        <begin position="74"/>
        <end position="97"/>
    </location>
</feature>
<feature type="zinc finger region" description="C2H2-type 2; degenerate" evidence="3">
    <location>
        <begin position="107"/>
        <end position="129"/>
    </location>
</feature>
<feature type="zinc finger region" description="C2H2-type 3; degenerate" evidence="3">
    <location>
        <begin position="165"/>
        <end position="188"/>
    </location>
</feature>
<feature type="zinc finger region" description="C2H2-type 4; degenerate" evidence="3">
    <location>
        <begin position="221"/>
        <end position="244"/>
    </location>
</feature>
<feature type="zinc finger region" description="C2H2-type 5; atypical" evidence="3">
    <location>
        <begin position="446"/>
        <end position="468"/>
    </location>
</feature>
<feature type="zinc finger region" description="C2H2-type 6" evidence="3">
    <location>
        <begin position="488"/>
        <end position="509"/>
    </location>
</feature>
<feature type="zinc finger region" description="C2H2-type 7" evidence="3">
    <location>
        <begin position="511"/>
        <end position="534"/>
    </location>
</feature>
<feature type="zinc finger region" description="C2H2-type 8; atypical" evidence="3">
    <location>
        <begin position="621"/>
        <end position="646"/>
    </location>
</feature>
<feature type="zinc finger region" description="C2H2-type 9; atypical" evidence="3">
    <location>
        <begin position="661"/>
        <end position="685"/>
    </location>
</feature>
<feature type="DNA-binding region" description="Homeobox" evidence="4">
    <location>
        <begin position="753"/>
        <end position="813"/>
    </location>
</feature>
<feature type="region of interest" description="Binds to beta-catenin/CTNNB1" evidence="8">
    <location>
        <begin position="1"/>
        <end position="685"/>
    </location>
</feature>
<feature type="region of interest" description="Disordered" evidence="5">
    <location>
        <begin position="133"/>
        <end position="154"/>
    </location>
</feature>
<feature type="region of interest" description="Neuroprotective peptide; contributes to CTNNB1-binding, but less effective than whole N-terminal region" evidence="6 8">
    <location>
        <begin position="354"/>
        <end position="361"/>
    </location>
</feature>
<feature type="region of interest" description="Disordered" evidence="5">
    <location>
        <begin position="360"/>
        <end position="438"/>
    </location>
</feature>
<feature type="region of interest" description="Disordered" evidence="5">
    <location>
        <begin position="690"/>
        <end position="711"/>
    </location>
</feature>
<feature type="region of interest" description="Disordered" evidence="5">
    <location>
        <begin position="851"/>
        <end position="1037"/>
    </location>
</feature>
<feature type="region of interest" description="Disordered" evidence="5">
    <location>
        <begin position="1050"/>
        <end position="1108"/>
    </location>
</feature>
<feature type="compositionally biased region" description="Basic and acidic residues" evidence="5">
    <location>
        <begin position="143"/>
        <end position="154"/>
    </location>
</feature>
<feature type="compositionally biased region" description="Polar residues" evidence="5">
    <location>
        <begin position="393"/>
        <end position="422"/>
    </location>
</feature>
<feature type="compositionally biased region" description="Pro residues" evidence="5">
    <location>
        <begin position="426"/>
        <end position="437"/>
    </location>
</feature>
<feature type="compositionally biased region" description="Polar residues" evidence="5">
    <location>
        <begin position="691"/>
        <end position="709"/>
    </location>
</feature>
<feature type="compositionally biased region" description="Basic and acidic residues" evidence="5">
    <location>
        <begin position="851"/>
        <end position="880"/>
    </location>
</feature>
<feature type="compositionally biased region" description="Acidic residues" evidence="5">
    <location>
        <begin position="928"/>
        <end position="938"/>
    </location>
</feature>
<feature type="compositionally biased region" description="Basic and acidic residues" evidence="5">
    <location>
        <begin position="939"/>
        <end position="959"/>
    </location>
</feature>
<feature type="compositionally biased region" description="Polar residues" evidence="5">
    <location>
        <begin position="977"/>
        <end position="988"/>
    </location>
</feature>
<feature type="modified residue" description="Phosphoserine" evidence="1">
    <location>
        <position position="98"/>
    </location>
</feature>
<feature type="modified residue" description="Asymmetric dimethylarginine" evidence="12">
    <location>
        <position position="348"/>
    </location>
</feature>
<feature type="modified residue" description="Phosphoserine" evidence="1">
    <location>
        <position position="408"/>
    </location>
</feature>
<feature type="modified residue" description="Phosphoserine" evidence="1">
    <location>
        <position position="412"/>
    </location>
</feature>
<feature type="modified residue" description="Phosphoserine" evidence="1">
    <location>
        <position position="607"/>
    </location>
</feature>
<feature type="modified residue" description="Phosphoserine" evidence="11">
    <location>
        <position position="708"/>
    </location>
</feature>
<feature type="modified residue" description="Phosphoserine" evidence="11">
    <location>
        <position position="737"/>
    </location>
</feature>
<feature type="modified residue" description="Phosphoserine" evidence="1">
    <location>
        <position position="804"/>
    </location>
</feature>
<feature type="modified residue" description="Phosphoserine" evidence="1">
    <location>
        <position position="875"/>
    </location>
</feature>
<feature type="modified residue" description="Phosphoserine" evidence="1">
    <location>
        <position position="877"/>
    </location>
</feature>
<feature type="modified residue" description="Phosphoserine" evidence="2">
    <location>
        <position position="885"/>
    </location>
</feature>
<feature type="modified residue" description="Phosphoserine" evidence="11">
    <location>
        <position position="888"/>
    </location>
</feature>
<feature type="modified residue" description="Phosphoserine" evidence="11">
    <location>
        <position position="904"/>
    </location>
</feature>
<feature type="modified residue" description="Phosphoserine" evidence="10 11">
    <location>
        <position position="959"/>
    </location>
</feature>
<feature type="modified residue" description="Phosphoserine" evidence="1">
    <location>
        <position position="961"/>
    </location>
</feature>
<feature type="modified residue" description="N6-acetyllysine; alternate" evidence="1">
    <location>
        <position position="1041"/>
    </location>
</feature>
<feature type="modified residue" description="N6-acetyllysine; alternate" evidence="1">
    <location>
        <position position="1048"/>
    </location>
</feature>
<feature type="modified residue" description="Phosphoserine" evidence="11">
    <location>
        <position position="1077"/>
    </location>
</feature>
<feature type="cross-link" description="Glycyl lysine isopeptide (Lys-Gly) (interchain with G-Cter in SUMO2)" evidence="1">
    <location>
        <position position="39"/>
    </location>
</feature>
<feature type="cross-link" description="Glycyl lysine isopeptide (Lys-Gly) (interchain with G-Cter in SUMO2)" evidence="1">
    <location>
        <position position="72"/>
    </location>
</feature>
<feature type="cross-link" description="Glycyl lysine isopeptide (Lys-Gly) (interchain with G-Cter in SUMO2)" evidence="1">
    <location>
        <position position="144"/>
    </location>
</feature>
<feature type="cross-link" description="Glycyl lysine isopeptide (Lys-Gly) (interchain with G-Cter in SUMO2)" evidence="1">
    <location>
        <position position="155"/>
    </location>
</feature>
<feature type="cross-link" description="Glycyl lysine isopeptide (Lys-Gly) (interchain with G-Cter in SUMO2)" evidence="1">
    <location>
        <position position="203"/>
    </location>
</feature>
<feature type="cross-link" description="Glycyl lysine isopeptide (Lys-Gly) (interchain with G-Cter in SUMO2)" evidence="1">
    <location>
        <position position="231"/>
    </location>
</feature>
<feature type="cross-link" description="Glycyl lysine isopeptide (Lys-Gly) (interchain with G-Cter in SUMO2)" evidence="1">
    <location>
        <position position="266"/>
    </location>
</feature>
<feature type="cross-link" description="Glycyl lysine isopeptide (Lys-Gly) (interchain with G-Cter in SUMO2)" evidence="1">
    <location>
        <position position="274"/>
    </location>
</feature>
<feature type="cross-link" description="Glycyl lysine isopeptide (Lys-Gly) (interchain with G-Cter in SUMO2)" evidence="1">
    <location>
        <position position="278"/>
    </location>
</feature>
<feature type="cross-link" description="Glycyl lysine isopeptide (Lys-Gly) (interchain with G-Cter in SUMO2)" evidence="1">
    <location>
        <position position="279"/>
    </location>
</feature>
<feature type="cross-link" description="Glycyl lysine isopeptide (Lys-Gly) (interchain with G-Cter in SUMO2)" evidence="1">
    <location>
        <position position="311"/>
    </location>
</feature>
<feature type="cross-link" description="Glycyl lysine isopeptide (Lys-Gly) (interchain with G-Cter in SUMO2)" evidence="1">
    <location>
        <position position="335"/>
    </location>
</feature>
<feature type="cross-link" description="Glycyl lysine isopeptide (Lys-Gly) (interchain with G-Cter in SUMO2)" evidence="1">
    <location>
        <position position="367"/>
    </location>
</feature>
<feature type="cross-link" description="Glycyl lysine isopeptide (Lys-Gly) (interchain with G-Cter in SUMO2)" evidence="1">
    <location>
        <position position="407"/>
    </location>
</feature>
<feature type="cross-link" description="Glycyl lysine isopeptide (Lys-Gly) (interchain with G-Cter in SUMO2)" evidence="1">
    <location>
        <position position="426"/>
    </location>
</feature>
<feature type="cross-link" description="Glycyl lysine isopeptide (Lys-Gly) (interchain with G-Cter in SUMO2)" evidence="1">
    <location>
        <position position="599"/>
    </location>
</feature>
<feature type="cross-link" description="Glycyl lysine isopeptide (Lys-Gly) (interchain with G-Cter in SUMO2)" evidence="1">
    <location>
        <position position="605"/>
    </location>
</feature>
<feature type="cross-link" description="Glycyl lysine isopeptide (Lys-Gly) (interchain with G-Cter in SUMO2)" evidence="1">
    <location>
        <position position="615"/>
    </location>
</feature>
<feature type="cross-link" description="Glycyl lysine isopeptide (Lys-Gly) (interchain with G-Cter in SUMO2)" evidence="1">
    <location>
        <position position="620"/>
    </location>
</feature>
<feature type="cross-link" description="Glycyl lysine isopeptide (Lys-Gly) (interchain with G-Cter in SUMO2)" evidence="1">
    <location>
        <position position="631"/>
    </location>
</feature>
<feature type="cross-link" description="Glycyl lysine isopeptide (Lys-Gly) (interchain with G-Cter in SUMO2)" evidence="1">
    <location>
        <position position="657"/>
    </location>
</feature>
<feature type="cross-link" description="Glycyl lysine isopeptide (Lys-Gly) (interchain with G-Cter in SUMO2)" evidence="1">
    <location>
        <position position="698"/>
    </location>
</feature>
<feature type="cross-link" description="Glycyl lysine isopeptide (Lys-Gly) (interchain with G-Cter in SUMO2)" evidence="1">
    <location>
        <position position="715"/>
    </location>
</feature>
<feature type="cross-link" description="Glycyl lysine isopeptide (Lys-Gly) (interchain with G-Cter in SUMO2)" evidence="1">
    <location>
        <position position="727"/>
    </location>
</feature>
<feature type="cross-link" description="Glycyl lysine isopeptide (Lys-Gly) (interchain with G-Cter in SUMO2)" evidence="1">
    <location>
        <position position="730"/>
    </location>
</feature>
<feature type="cross-link" description="Glycyl lysine isopeptide (Lys-Gly) (interchain with G-Cter in SUMO2)" evidence="1">
    <location>
        <position position="744"/>
    </location>
</feature>
<feature type="cross-link" description="Glycyl lysine isopeptide (Lys-Gly) (interchain with G-Cter in SUMO2)" evidence="1">
    <location>
        <position position="806"/>
    </location>
</feature>
<feature type="cross-link" description="Glycyl lysine isopeptide (Lys-Gly) (interchain with G-Cter in SUMO2)" evidence="1">
    <location>
        <position position="828"/>
    </location>
</feature>
<feature type="cross-link" description="Glycyl lysine isopeptide (Lys-Gly) (interchain with G-Cter in SUMO2)" evidence="1">
    <location>
        <position position="834"/>
    </location>
</feature>
<feature type="cross-link" description="Glycyl lysine isopeptide (Lys-Gly) (interchain with G-Cter in SUMO2)" evidence="1">
    <location>
        <position position="913"/>
    </location>
</feature>
<feature type="cross-link" description="Glycyl lysine isopeptide (Lys-Gly) (interchain with G-Cter in SUMO2)" evidence="1">
    <location>
        <position position="928"/>
    </location>
</feature>
<feature type="cross-link" description="Glycyl lysine isopeptide (Lys-Gly) (interchain with G-Cter in SUMO2)" evidence="1">
    <location>
        <position position="941"/>
    </location>
</feature>
<feature type="cross-link" description="Glycyl lysine isopeptide (Lys-Gly) (interchain with G-Cter in SUMO2)" evidence="1">
    <location>
        <position position="1022"/>
    </location>
</feature>
<feature type="cross-link" description="Glycyl lysine isopeptide (Lys-Gly) (interchain with G-Cter in SUMO2); alternate" evidence="1">
    <location>
        <position position="1041"/>
    </location>
</feature>
<feature type="cross-link" description="Glycyl lysine isopeptide (Lys-Gly) (interchain with G-Cter in SUMO2); alternate" evidence="1">
    <location>
        <position position="1048"/>
    </location>
</feature>
<name>ADNP_MOUSE</name>
<protein>
    <recommendedName>
        <fullName>Activity-dependent neuroprotector homeobox protein</fullName>
    </recommendedName>
    <alternativeName>
        <fullName>Activity-dependent neuroprotective protein</fullName>
    </alternativeName>
</protein>
<dbReference type="EMBL" id="BX005039">
    <property type="status" value="NOT_ANNOTATED_CDS"/>
    <property type="molecule type" value="Genomic_DNA"/>
</dbReference>
<dbReference type="EMBL" id="AF068198">
    <property type="protein sequence ID" value="AAD19843.1"/>
    <property type="molecule type" value="mRNA"/>
</dbReference>
<dbReference type="CCDS" id="CCDS38342.1"/>
<dbReference type="RefSeq" id="NP_001297015.1">
    <property type="nucleotide sequence ID" value="NM_001310086.1"/>
</dbReference>
<dbReference type="RefSeq" id="NP_033758.2">
    <property type="nucleotide sequence ID" value="NM_009628.3"/>
</dbReference>
<dbReference type="CORUM" id="Q9Z103"/>
<dbReference type="FunCoup" id="Q9Z103">
    <property type="interactions" value="3501"/>
</dbReference>
<dbReference type="IntAct" id="Q9Z103">
    <property type="interactions" value="5"/>
</dbReference>
<dbReference type="MINT" id="Q9Z103"/>
<dbReference type="STRING" id="10090.ENSMUSP00000085316"/>
<dbReference type="GlyGen" id="Q9Z103">
    <property type="glycosylation" value="3 sites, 1 N-linked glycan (1 site), 1 O-linked glycan (2 sites)"/>
</dbReference>
<dbReference type="iPTMnet" id="Q9Z103"/>
<dbReference type="PhosphoSitePlus" id="Q9Z103"/>
<dbReference type="SwissPalm" id="Q9Z103"/>
<dbReference type="jPOST" id="Q9Z103"/>
<dbReference type="PaxDb" id="10090-ENSMUSP00000085316"/>
<dbReference type="PeptideAtlas" id="Q9Z103"/>
<dbReference type="ProteomicsDB" id="285555"/>
<dbReference type="Pumba" id="Q9Z103"/>
<dbReference type="Antibodypedia" id="1423">
    <property type="antibodies" value="352 antibodies from 34 providers"/>
</dbReference>
<dbReference type="DNASU" id="11538"/>
<dbReference type="Ensembl" id="ENSMUST00000057793.11">
    <property type="protein sequence ID" value="ENSMUSP00000056809.5"/>
    <property type="gene ID" value="ENSMUSG00000051149.16"/>
</dbReference>
<dbReference type="Ensembl" id="ENSMUST00000088001.6">
    <property type="protein sequence ID" value="ENSMUSP00000085316.6"/>
    <property type="gene ID" value="ENSMUSG00000051149.16"/>
</dbReference>
<dbReference type="GeneID" id="11538"/>
<dbReference type="KEGG" id="mmu:11538"/>
<dbReference type="UCSC" id="uc008oaq.1">
    <property type="organism name" value="mouse"/>
</dbReference>
<dbReference type="AGR" id="MGI:1338758"/>
<dbReference type="CTD" id="23394"/>
<dbReference type="MGI" id="MGI:1338758">
    <property type="gene designation" value="Adnp"/>
</dbReference>
<dbReference type="VEuPathDB" id="HostDB:ENSMUSG00000051149"/>
<dbReference type="eggNOG" id="ENOG502QSYX">
    <property type="taxonomic scope" value="Eukaryota"/>
</dbReference>
<dbReference type="GeneTree" id="ENSGT00530000063631"/>
<dbReference type="InParanoid" id="Q9Z103"/>
<dbReference type="OMA" id="PYCTFNG"/>
<dbReference type="OrthoDB" id="8891572at2759"/>
<dbReference type="PhylomeDB" id="Q9Z103"/>
<dbReference type="TreeFam" id="TF328818"/>
<dbReference type="BioGRID-ORCS" id="11538">
    <property type="hits" value="9 hits in 82 CRISPR screens"/>
</dbReference>
<dbReference type="PRO" id="PR:Q9Z103"/>
<dbReference type="Proteomes" id="UP000000589">
    <property type="component" value="Chromosome 2"/>
</dbReference>
<dbReference type="RNAct" id="Q9Z103">
    <property type="molecule type" value="protein"/>
</dbReference>
<dbReference type="Bgee" id="ENSMUSG00000051149">
    <property type="expression patterns" value="Expressed in embryonic post-anal tail and 85 other cell types or tissues"/>
</dbReference>
<dbReference type="GO" id="GO:0030424">
    <property type="term" value="C:axon"/>
    <property type="evidence" value="ECO:0007669"/>
    <property type="project" value="Ensembl"/>
</dbReference>
<dbReference type="GO" id="GO:0005694">
    <property type="term" value="C:chromosome"/>
    <property type="evidence" value="ECO:0007669"/>
    <property type="project" value="UniProtKB-SubCell"/>
</dbReference>
<dbReference type="GO" id="GO:0030425">
    <property type="term" value="C:dendrite"/>
    <property type="evidence" value="ECO:0007669"/>
    <property type="project" value="Ensembl"/>
</dbReference>
<dbReference type="GO" id="GO:0005615">
    <property type="term" value="C:extracellular space"/>
    <property type="evidence" value="ECO:0000314"/>
    <property type="project" value="MGI"/>
</dbReference>
<dbReference type="GO" id="GO:0043025">
    <property type="term" value="C:neuronal cell body"/>
    <property type="evidence" value="ECO:0007669"/>
    <property type="project" value="Ensembl"/>
</dbReference>
<dbReference type="GO" id="GO:0005634">
    <property type="term" value="C:nucleus"/>
    <property type="evidence" value="ECO:0000305"/>
    <property type="project" value="MGI"/>
</dbReference>
<dbReference type="GO" id="GO:0090575">
    <property type="term" value="C:RNA polymerase II transcription regulator complex"/>
    <property type="evidence" value="ECO:0007669"/>
    <property type="project" value="Ensembl"/>
</dbReference>
<dbReference type="GO" id="GO:0008013">
    <property type="term" value="F:beta-catenin binding"/>
    <property type="evidence" value="ECO:0000353"/>
    <property type="project" value="UniProtKB"/>
</dbReference>
<dbReference type="GO" id="GO:0048487">
    <property type="term" value="F:beta-tubulin binding"/>
    <property type="evidence" value="ECO:0007669"/>
    <property type="project" value="Ensembl"/>
</dbReference>
<dbReference type="GO" id="GO:0003682">
    <property type="term" value="F:chromatin binding"/>
    <property type="evidence" value="ECO:0000314"/>
    <property type="project" value="MGI"/>
</dbReference>
<dbReference type="GO" id="GO:0005507">
    <property type="term" value="F:copper ion binding"/>
    <property type="evidence" value="ECO:0007669"/>
    <property type="project" value="Ensembl"/>
</dbReference>
<dbReference type="GO" id="GO:0000981">
    <property type="term" value="F:DNA-binding transcription factor activity, RNA polymerase II-specific"/>
    <property type="evidence" value="ECO:0000314"/>
    <property type="project" value="ARUK-UCL"/>
</dbReference>
<dbReference type="GO" id="GO:0042277">
    <property type="term" value="F:peptide binding"/>
    <property type="evidence" value="ECO:0007669"/>
    <property type="project" value="Ensembl"/>
</dbReference>
<dbReference type="GO" id="GO:0000977">
    <property type="term" value="F:RNA polymerase II transcription regulatory region sequence-specific DNA binding"/>
    <property type="evidence" value="ECO:0000314"/>
    <property type="project" value="ARUK-UCL"/>
</dbReference>
<dbReference type="GO" id="GO:0008270">
    <property type="term" value="F:zinc ion binding"/>
    <property type="evidence" value="ECO:0007669"/>
    <property type="project" value="UniProtKB-KW"/>
</dbReference>
<dbReference type="GO" id="GO:0019934">
    <property type="term" value="P:cGMP-mediated signaling"/>
    <property type="evidence" value="ECO:0007669"/>
    <property type="project" value="Ensembl"/>
</dbReference>
<dbReference type="GO" id="GO:0044849">
    <property type="term" value="P:estrous cycle"/>
    <property type="evidence" value="ECO:0007669"/>
    <property type="project" value="Ensembl"/>
</dbReference>
<dbReference type="GO" id="GO:0033484">
    <property type="term" value="P:intracellular nitric oxide homeostasis"/>
    <property type="evidence" value="ECO:0007669"/>
    <property type="project" value="Ensembl"/>
</dbReference>
<dbReference type="GO" id="GO:0010629">
    <property type="term" value="P:negative regulation of gene expression"/>
    <property type="evidence" value="ECO:0007669"/>
    <property type="project" value="Ensembl"/>
</dbReference>
<dbReference type="GO" id="GO:0043524">
    <property type="term" value="P:negative regulation of neuron apoptotic process"/>
    <property type="evidence" value="ECO:0000314"/>
    <property type="project" value="MGI"/>
</dbReference>
<dbReference type="GO" id="GO:0050805">
    <property type="term" value="P:negative regulation of synaptic transmission"/>
    <property type="evidence" value="ECO:0007669"/>
    <property type="project" value="Ensembl"/>
</dbReference>
<dbReference type="GO" id="GO:0051402">
    <property type="term" value="P:neuron apoptotic process"/>
    <property type="evidence" value="ECO:0000314"/>
    <property type="project" value="MGI"/>
</dbReference>
<dbReference type="GO" id="GO:0030182">
    <property type="term" value="P:neuron differentiation"/>
    <property type="evidence" value="ECO:0000315"/>
    <property type="project" value="UniProtKB"/>
</dbReference>
<dbReference type="GO" id="GO:0045773">
    <property type="term" value="P:positive regulation of axon extension"/>
    <property type="evidence" value="ECO:0007669"/>
    <property type="project" value="Ensembl"/>
</dbReference>
<dbReference type="GO" id="GO:0090263">
    <property type="term" value="P:positive regulation of canonical Wnt signaling pathway"/>
    <property type="evidence" value="ECO:0000315"/>
    <property type="project" value="UniProtKB"/>
</dbReference>
<dbReference type="GO" id="GO:0010976">
    <property type="term" value="P:positive regulation of neuron projection development"/>
    <property type="evidence" value="ECO:0007669"/>
    <property type="project" value="Ensembl"/>
</dbReference>
<dbReference type="GO" id="GO:0051965">
    <property type="term" value="P:positive regulation of synapse assembly"/>
    <property type="evidence" value="ECO:0007669"/>
    <property type="project" value="Ensembl"/>
</dbReference>
<dbReference type="GO" id="GO:0010468">
    <property type="term" value="P:regulation of gene expression"/>
    <property type="evidence" value="ECO:0000315"/>
    <property type="project" value="UniProtKB"/>
</dbReference>
<dbReference type="GO" id="GO:0006357">
    <property type="term" value="P:regulation of transcription by RNA polymerase II"/>
    <property type="evidence" value="ECO:0000314"/>
    <property type="project" value="ARUK-UCL"/>
</dbReference>
<dbReference type="GO" id="GO:0009743">
    <property type="term" value="P:response to carbohydrate"/>
    <property type="evidence" value="ECO:0007669"/>
    <property type="project" value="Ensembl"/>
</dbReference>
<dbReference type="GO" id="GO:0007614">
    <property type="term" value="P:short-term memory"/>
    <property type="evidence" value="ECO:0007669"/>
    <property type="project" value="Ensembl"/>
</dbReference>
<dbReference type="CDD" id="cd00086">
    <property type="entry name" value="homeodomain"/>
    <property type="match status" value="1"/>
</dbReference>
<dbReference type="FunFam" id="1.10.10.60:FF:000199">
    <property type="entry name" value="Activity-dependent neuroprotector homeobox b"/>
    <property type="match status" value="1"/>
</dbReference>
<dbReference type="Gene3D" id="3.30.160.60">
    <property type="entry name" value="Classic Zinc Finger"/>
    <property type="match status" value="1"/>
</dbReference>
<dbReference type="Gene3D" id="1.10.10.60">
    <property type="entry name" value="Homeodomain-like"/>
    <property type="match status" value="1"/>
</dbReference>
<dbReference type="InterPro" id="IPR038861">
    <property type="entry name" value="ADNP/ADNP2"/>
</dbReference>
<dbReference type="InterPro" id="IPR045762">
    <property type="entry name" value="ADNP_Znf"/>
</dbReference>
<dbReference type="InterPro" id="IPR001356">
    <property type="entry name" value="HD"/>
</dbReference>
<dbReference type="InterPro" id="IPR009057">
    <property type="entry name" value="Homeodomain-like_sf"/>
</dbReference>
<dbReference type="InterPro" id="IPR013087">
    <property type="entry name" value="Znf_C2H2_type"/>
</dbReference>
<dbReference type="PANTHER" id="PTHR15740:SF1">
    <property type="entry name" value="ACTIVITY-DEPENDENT NEUROPROTECTOR HOMEOBOX PROTEIN"/>
    <property type="match status" value="1"/>
</dbReference>
<dbReference type="PANTHER" id="PTHR15740">
    <property type="entry name" value="NEUROPROTECTIVE PEPTIDE-CONTAINING PROTEIN"/>
    <property type="match status" value="1"/>
</dbReference>
<dbReference type="Pfam" id="PF19627">
    <property type="entry name" value="ADNP_N"/>
    <property type="match status" value="1"/>
</dbReference>
<dbReference type="Pfam" id="PF00046">
    <property type="entry name" value="Homeodomain"/>
    <property type="match status" value="1"/>
</dbReference>
<dbReference type="SMART" id="SM00389">
    <property type="entry name" value="HOX"/>
    <property type="match status" value="1"/>
</dbReference>
<dbReference type="SMART" id="SM00355">
    <property type="entry name" value="ZnF_C2H2"/>
    <property type="match status" value="8"/>
</dbReference>
<dbReference type="SUPFAM" id="SSF46689">
    <property type="entry name" value="Homeodomain-like"/>
    <property type="match status" value="1"/>
</dbReference>
<dbReference type="PROSITE" id="PS50071">
    <property type="entry name" value="HOMEOBOX_2"/>
    <property type="match status" value="1"/>
</dbReference>
<dbReference type="PROSITE" id="PS00028">
    <property type="entry name" value="ZINC_FINGER_C2H2_1"/>
    <property type="match status" value="1"/>
</dbReference>
<dbReference type="PROSITE" id="PS50157">
    <property type="entry name" value="ZINC_FINGER_C2H2_2"/>
    <property type="match status" value="1"/>
</dbReference>
<comment type="function">
    <text evidence="7 8">May be involved in transcriptional regulation (PubMed:23071114, PubMed:32533114). May mediate some of the neuroprotective peptide VIP-associated effects involving normal growth and cancer proliferation. Positively modulates WNT-beta-catenin/CTNN1B signaling, acting by regulating phosphorylation of, and thereby stabilizing, CTNNB1 (PubMed:32533114). May be required for neural induction and neuronal differentiation (PubMed:32533114). May be involved in erythroid differentiation (PubMed:23071114).</text>
</comment>
<comment type="subunit">
    <text evidence="8">Interacts (via N-terminal region) with beta-catenin/CTNNB1 (via the central armadillo domains); interaction is direct and stabilizes CTNNB1 by modulating its phosphorylation by glycogen synthase kinase-3 beta GSK3B.</text>
</comment>
<comment type="subcellular location">
    <subcellularLocation>
        <location evidence="4">Nucleus</location>
    </subcellularLocation>
    <subcellularLocation>
        <location evidence="9">Chromosome</location>
    </subcellularLocation>
</comment>
<comment type="tissue specificity">
    <text>Expressed in the brain, with a higher expression in cerebellum and hippocampus. Weakly expressed in lung, kidney and intestine, and expressed at intermediate level in testis.</text>
</comment>
<comment type="induction">
    <text>By the neuroprotective peptide VIP.</text>
</comment>
<comment type="miscellaneous">
    <text>When isolated from the sequence, the neuroprotective peptide provides neuroprotection at subfemtomolar concentrations against toxicity associated with tetrodoxin (electrical blockade), the amyloid-beta peptide (the Alzheimer disease neurotoxin), N-methyl-aspartate (excitotoxicity), and the human immunideficiency virus (HIV) envelope protein.</text>
</comment>
<sequence length="1108" mass="124308">MFQLPVNNLGSLRKARKTVKKILSDIGLEYCKEHIEDFKQFEPNDFYLKNTTWEDVGLWDPSLTKNQDYRTKPFCCSACPFSSKFFSAYKSHFRNVHSEDFENRILLNCPYCTFNADKKTLETHIKIFHAPNSSAPSSSLSTFKDKNKNDGLKPKQADNVEQAVYYCKKCTYRDPLYEIVRKHIYREHFQHVAAPYIAKAGEKSLNGAVSLGTNAREECNIHCKRCLFMPKSYEALVQHVIEDHERIGYQVTAMIGHTNVVVPRAKPLMLIAPKPQDKKGMGLPPRISSLASGNVRSLPSQQMVNRLSIPKPNLNSTGVNMMSNVHLQQNNYGVKSVGQSYGVGQSVRLGLGGNAPVSIPQQSQSVKQLLPSGNGRSFGLGAEQRPPAAARYSLQTANTSLPPGQVKSPSVSQSQASRVLGQSSSKPPPAATGPPPSNHCATQKWKICTICNELFPENVYSVHFEKEHKAEKVPAVANYIMKIHNFTSKCLYCNRYLPTDTLLNHMLIHGLSCPYCRSTFNDVEKMAAHMRMVHIDEEMGPKTDSTLSFDLTLQQGSHTNIHLLVTTYNLRDAPAESVAYHAQNNAPVPPKPQPKVQEKADVPVKSSPQAAVPYKKDVGKTLCPLCFSILKGPISDALAHHLRERHQVIQTVHPVEKKLTYKCIHCLGVYTSNMTASTITLHLVHCRGVGKTQNGQDKTNAPSRLNQSPGLAPVKRTYEQMEFPLLKKRKLEEDADSPSCFEEKPEEPVVLALDPKGHEDDSYEARKSFLTKYFNKQPYPTRREIEKLAASLWLWKSDIASHFSNKRKKCVRDCEKYKPGVLLGFNMKELNKVKHEMDFDAEWLFENHDEKDSRVNASKTVDKKHNLGKEDDSFSDSFEHLEEESNGSGSPFDPVFEVEPKIPSDNLEEPVPKVIPEGALESEKLDQKEEEEEEEEEDGSKYETIHLTEEPAKLMHDASDSEVDQDDVVEWKDGASPSESGPGSQQISDFEDNTCEMKPGTWSDESSQSEDARSSKPAAKKKATVQDDTEQLKWKNSSYGKVEGFWSKDQSQWENASENAERLPNPQIEWQNSTIDSEDGEQFDSMTDGVADPMHGSLTGVKLSSQQA</sequence>
<proteinExistence type="evidence at protein level"/>
<organism>
    <name type="scientific">Mus musculus</name>
    <name type="common">Mouse</name>
    <dbReference type="NCBI Taxonomy" id="10090"/>
    <lineage>
        <taxon>Eukaryota</taxon>
        <taxon>Metazoa</taxon>
        <taxon>Chordata</taxon>
        <taxon>Craniata</taxon>
        <taxon>Vertebrata</taxon>
        <taxon>Euteleostomi</taxon>
        <taxon>Mammalia</taxon>
        <taxon>Eutheria</taxon>
        <taxon>Euarchontoglires</taxon>
        <taxon>Glires</taxon>
        <taxon>Rodentia</taxon>
        <taxon>Myomorpha</taxon>
        <taxon>Muroidea</taxon>
        <taxon>Muridae</taxon>
        <taxon>Murinae</taxon>
        <taxon>Mus</taxon>
        <taxon>Mus</taxon>
    </lineage>
</organism>
<accession>Q9Z103</accession>
<accession>A2BDX0</accession>
<evidence type="ECO:0000250" key="1">
    <source>
        <dbReference type="UniProtKB" id="Q9H2P0"/>
    </source>
</evidence>
<evidence type="ECO:0000250" key="2">
    <source>
        <dbReference type="UniProtKB" id="Q9JKL8"/>
    </source>
</evidence>
<evidence type="ECO:0000255" key="3">
    <source>
        <dbReference type="PROSITE-ProRule" id="PRU00042"/>
    </source>
</evidence>
<evidence type="ECO:0000255" key="4">
    <source>
        <dbReference type="PROSITE-ProRule" id="PRU00108"/>
    </source>
</evidence>
<evidence type="ECO:0000256" key="5">
    <source>
        <dbReference type="SAM" id="MobiDB-lite"/>
    </source>
</evidence>
<evidence type="ECO:0000269" key="6">
    <source>
    </source>
</evidence>
<evidence type="ECO:0000269" key="7">
    <source>
    </source>
</evidence>
<evidence type="ECO:0000269" key="8">
    <source>
    </source>
</evidence>
<evidence type="ECO:0000305" key="9">
    <source>
    </source>
</evidence>
<evidence type="ECO:0007744" key="10">
    <source>
    </source>
</evidence>
<evidence type="ECO:0007744" key="11">
    <source>
    </source>
</evidence>
<evidence type="ECO:0007744" key="12">
    <source>
    </source>
</evidence>